<reference key="1">
    <citation type="submission" date="2011-09" db="EMBL/GenBank/DDBJ databases">
        <title>The vancomycin biosynthetic gene cluster.</title>
        <authorList>
            <person name="Woertz T."/>
            <person name="Dietz S."/>
            <person name="Zerbe K."/>
            <person name="Robinson J.A."/>
        </authorList>
    </citation>
    <scope>NUCLEOTIDE SEQUENCE [GENOMIC DNA]</scope>
    <source>
        <strain>ATCC19795</strain>
    </source>
</reference>
<reference key="2">
    <citation type="journal article" date="2001" name="Proc. Natl. Acad. Sci. U.S.A.">
        <title>Glycopeptide antibiotic biosynthesis: enzymatic assembly of the dedicated amino acid monomer (S)-3,5-dihydroxyphenylglycine.</title>
        <authorList>
            <person name="Chen H."/>
            <person name="Tseng C.C."/>
            <person name="Hubbard B.K."/>
            <person name="Walsh C.T."/>
        </authorList>
    </citation>
    <scope>FUNCTION</scope>
    <scope>CATALYTIC ACTIVITY</scope>
    <source>
        <strain>NRRL18098</strain>
    </source>
</reference>
<evidence type="ECO:0000269" key="1">
    <source>
    </source>
</evidence>
<evidence type="ECO:0000303" key="2">
    <source>
    </source>
</evidence>
<evidence type="ECO:0000305" key="3"/>
<evidence type="ECO:0000305" key="4">
    <source>
    </source>
</evidence>
<organism>
    <name type="scientific">Amycolatopsis orientalis</name>
    <name type="common">Nocardia orientalis</name>
    <dbReference type="NCBI Taxonomy" id="31958"/>
    <lineage>
        <taxon>Bacteria</taxon>
        <taxon>Bacillati</taxon>
        <taxon>Actinomycetota</taxon>
        <taxon>Actinomycetes</taxon>
        <taxon>Pseudonocardiales</taxon>
        <taxon>Pseudonocardiaceae</taxon>
        <taxon>Amycolatopsis</taxon>
    </lineage>
</organism>
<comment type="function">
    <text evidence="1">Involved in the biosynthesis of the nonproteinogenic amino acid monomer (S)-3,5-dihydroxyphenylglycine (Dpg) responsible of the production of vancomycin and teicoplanin antibiotics. Catalyzes the syn-addition of a water molecule across the double bond of a trans-2-enoyl-CoA thioester, resulting in the formation of a beta-hydroxyacyl-CoA thioester. Physiologically, DpgB could act as a dehydratase, facilitating the aromatization of the DPA-S-DgpA or DPA-S-CoA intermediate.</text>
</comment>
<comment type="catalytic activity">
    <reaction evidence="1">
        <text>a (3S)-3-hydroxyacyl-CoA = a (2E)-enoyl-CoA + H2O</text>
        <dbReference type="Rhea" id="RHEA:16105"/>
        <dbReference type="ChEBI" id="CHEBI:15377"/>
        <dbReference type="ChEBI" id="CHEBI:57318"/>
        <dbReference type="ChEBI" id="CHEBI:58856"/>
        <dbReference type="EC" id="4.2.1.17"/>
    </reaction>
</comment>
<comment type="catalytic activity">
    <reaction evidence="1">
        <text>a 4-saturated-(3S)-3-hydroxyacyl-CoA = a (3E)-enoyl-CoA + H2O</text>
        <dbReference type="Rhea" id="RHEA:20724"/>
        <dbReference type="ChEBI" id="CHEBI:15377"/>
        <dbReference type="ChEBI" id="CHEBI:58521"/>
        <dbReference type="ChEBI" id="CHEBI:137480"/>
        <dbReference type="EC" id="4.2.1.17"/>
    </reaction>
</comment>
<comment type="pathway">
    <text evidence="4">Antibiotic biosynthesis; vancomycin biosynthesis.</text>
</comment>
<comment type="similarity">
    <text evidence="3">Belongs to the enoyl-CoA hydratase/isomerase family.</text>
</comment>
<keyword id="KW-0045">Antibiotic biosynthesis</keyword>
<keyword id="KW-0456">Lyase</keyword>
<accession>G4V4T5</accession>
<gene>
    <name type="primary">dpgB</name>
</gene>
<name>DPGB_AMYOR</name>
<proteinExistence type="evidence at protein level"/>
<sequence>MNGELVLRLDGARPLSPASVEELSALCDRAEDDREAGPVTVHVTGVPSAGWTAGLTVGLVSKWERVVRRFERLGRLTIAVASGECAGTALDLLLAADLRIVTPGTRLRLAPVGGSTWPGMSVYRLTQQAGAAGIRRAVLLGTPIEVDRALALNLVDEVSDDPAKTLAGLAEAAAALDGAETAIRRQLIFEDGSTTFEDALGAHLAAADRALRREATS</sequence>
<feature type="chain" id="PRO_0000435605" description="Enoyl-CoA-hydratase">
    <location>
        <begin position="1"/>
        <end position="217"/>
    </location>
</feature>
<dbReference type="EC" id="4.2.1.17" evidence="1"/>
<dbReference type="EMBL" id="HE589771">
    <property type="protein sequence ID" value="CCD33160.1"/>
    <property type="molecule type" value="Genomic_DNA"/>
</dbReference>
<dbReference type="SMR" id="G4V4T5"/>
<dbReference type="STRING" id="31958.SD37_33605"/>
<dbReference type="eggNOG" id="COG1024">
    <property type="taxonomic scope" value="Bacteria"/>
</dbReference>
<dbReference type="UniPathway" id="UPA00162"/>
<dbReference type="GO" id="GO:0004300">
    <property type="term" value="F:enoyl-CoA hydratase activity"/>
    <property type="evidence" value="ECO:0000314"/>
    <property type="project" value="UniProtKB"/>
</dbReference>
<dbReference type="GO" id="GO:0033072">
    <property type="term" value="P:vancomycin biosynthetic process"/>
    <property type="evidence" value="ECO:0007669"/>
    <property type="project" value="UniProtKB-UniPathway"/>
</dbReference>
<dbReference type="Gene3D" id="3.90.226.10">
    <property type="entry name" value="2-enoyl-CoA Hydratase, Chain A, domain 1"/>
    <property type="match status" value="1"/>
</dbReference>
<dbReference type="InterPro" id="IPR029045">
    <property type="entry name" value="ClpP/crotonase-like_dom_sf"/>
</dbReference>
<dbReference type="InterPro" id="IPR053545">
    <property type="entry name" value="Enoyl-CoA_hydratase-like"/>
</dbReference>
<dbReference type="NCBIfam" id="NF042431">
    <property type="entry name" value="EnCoAhydt_DpgB"/>
    <property type="match status" value="1"/>
</dbReference>
<dbReference type="PANTHER" id="PTHR43459:SF1">
    <property type="entry name" value="EG:BACN32G11.4 PROTEIN"/>
    <property type="match status" value="1"/>
</dbReference>
<dbReference type="PANTHER" id="PTHR43459">
    <property type="entry name" value="ENOYL-COA HYDRATASE"/>
    <property type="match status" value="1"/>
</dbReference>
<dbReference type="SUPFAM" id="SSF52096">
    <property type="entry name" value="ClpP/crotonase"/>
    <property type="match status" value="1"/>
</dbReference>
<protein>
    <recommendedName>
        <fullName evidence="2">Enoyl-CoA-hydratase</fullName>
        <ecNumber evidence="1">4.2.1.17</ecNumber>
    </recommendedName>
</protein>